<sequence length="1756" mass="197308">MRRSKAYGERYLASVQGSAPSPGKKLRGFYFAKLYYEAKEYDLAKKYVCTYLSVQERDPRAHRFLGLLYELEENTEKAVECYRRSLELNPPQKDLVLKIAELLCKNDVTDGRAKYWVERAAKLFPGSPAIYKLKEHLLDCEGEDGWNKLFDWIQSELYVRPDDVHMNIRLVELYRSNKRLKDAVARCHEAERNIALRSSLEWNSCVVQTLKEYLESLQCLESDKSDWRATNTDLLLAYANLMLLTLSTRDVQESRELLESFDSALQSAKSSLGGNDELSATFLEMKGHFYMHAGSLLLKMGQHGNNVQWQALSELAALCYVIAFQVPRPKIKLIKGEAGQNLLEMMACDRLSQSGHMLLNLSRGKQDFLKEVVETFANKSGQSVLYNALFSSQSSKDTSFLGSDDIGNIDVQEPELEDLARYDVGAIQAHNGSLQHLTWLGLQWNSLPALPGIRKWLKQLFHHLPQETSRLETNAPESICILDLEVFLLGVVYTSHLQLKEKCNSHHSSYQPLCLPLPVCKRLCTERQKSWWDAVCTLIHRKAVPGNSAELRLVVQHEINTLRAQEKHGLQPALLVHWAKCLQKMGRGLNSSYDQQEYIGRSVHYWKKVLPLLKIIKKNSIPEPIDPLFKHFHSVDIQASEIVEYEEDAHITFAILDAVHGNIEDAVTAFESIKSVVSYWNLALIFHRKAEDIENDAVFPEEQEECKNYLRKTRDYLIKIIDDSDSNLSVVKKLPVPLESVKEMLKSVMQELEDYSEGGPLYKNGSLRNADSEIKHSTPSPTKYSLSPSKSYKYSPKTPPRWAEDQNSLRKMICQEVKAITKLNSSKSASRHRWPTENYGPDSVPDGYQGSQTFHGAPLTVATTGPSVYYSQSPAYNSQYLLRPAANVTPTKGSSNTEFKSTKEGFSIAVSADGFKFGISEPGNQEKKSEKPLENDTGFQAQDISGQKNGRGVIFGQTSSTFTFADVAKSTSGEGFQFGKKDPNFKGFSGAGEKLFSSQCGKMANKANTSGDFEKDDDACKTEDSDDIHFEPVVQMPEKVELVTGEEGEKVLYSQGVKLFRFDAEISQWKERGLGNLKILKNEVNGKPRMLMRRDQVLKVCANHWITTTMNLKPLSGSDRAWMWLASDFSDGDAKLERLAAQFKTPELAEEFKQKFEECQRLLLDIPLQTPHKLVDTGRAAKLIQRAEEMKSGLKDFKTFLTNDQTKVTEEENKGSGTGAAGASDTTIKPNPENTGPTLEWDNYDLREDALDDNVSSSSVHDSPLASSPVRKNIFRFDESTTGFNFSFKSALSLSKSPAKLNQSGTSVGTDEESDVTQEEERDGQYFEPVVPLPDLVEVSSGEENEQVVFSHMAELYRYDKDVGQWKERGIGDIKILQNYDNKQVRIVMRRDQVLKLCANHRITPDMSLQNMKGTERVWVWTACDFADGERKVEHLAVRFKLQDVADSFKKIFDEAKTAQEKDSLITPHVSRSSTPRESPCGKIAVAVLEETTRERTDVIQGDDVADAASEVEVSSTSETTTKAVVSPPKFVFGSESVKRIFSSEKSNPFAFGNSSATGSLFGFSFNAPLKSNDSETSSVAQSGSESKVEPKKCELSKNSDIEQSSDSKVKNLSASFPMEESSINYTFKTPEKEPPLWHAEFTKEELVQKLSSTTKSADQLNGLLRETEATSAVLMEQIKLLKSEIRRLERNQEESAANVEHLKNVLLQFIFLKPGSERESLLPVINTMLQLSPEEKGKLAAVAQGLQETSIPKKK</sequence>
<accession>P0DJD1</accession>
<accession>P0C839</accession>
<accession>Q68DN6</accession>
<accession>Q6V1X0</accession>
<keyword id="KW-0597">Phosphoprotein</keyword>
<keyword id="KW-1267">Proteomics identification</keyword>
<keyword id="KW-1185">Reference proteome</keyword>
<keyword id="KW-0677">Repeat</keyword>
<keyword id="KW-0802">TPR repeat</keyword>
<evidence type="ECO:0000250" key="1">
    <source>
        <dbReference type="UniProtKB" id="Q99666"/>
    </source>
</evidence>
<evidence type="ECO:0000255" key="2">
    <source>
        <dbReference type="PROSITE-ProRule" id="PRU00164"/>
    </source>
</evidence>
<evidence type="ECO:0000255" key="3">
    <source>
        <dbReference type="PROSITE-ProRule" id="PRU00250"/>
    </source>
</evidence>
<evidence type="ECO:0000256" key="4">
    <source>
        <dbReference type="SAM" id="MobiDB-lite"/>
    </source>
</evidence>
<evidence type="ECO:0000305" key="5"/>
<reference key="1">
    <citation type="journal article" date="2005" name="Nature">
        <title>Generation and annotation of the DNA sequences of human chromosomes 2 and 4.</title>
        <authorList>
            <person name="Hillier L.W."/>
            <person name="Graves T.A."/>
            <person name="Fulton R.S."/>
            <person name="Fulton L.A."/>
            <person name="Pepin K.H."/>
            <person name="Minx P."/>
            <person name="Wagner-McPherson C."/>
            <person name="Layman D."/>
            <person name="Wylie K."/>
            <person name="Sekhon M."/>
            <person name="Becker M.C."/>
            <person name="Fewell G.A."/>
            <person name="Delehaunty K.D."/>
            <person name="Miner T.L."/>
            <person name="Nash W.E."/>
            <person name="Kremitzki C."/>
            <person name="Oddy L."/>
            <person name="Du H."/>
            <person name="Sun H."/>
            <person name="Bradshaw-Cordum H."/>
            <person name="Ali J."/>
            <person name="Carter J."/>
            <person name="Cordes M."/>
            <person name="Harris A."/>
            <person name="Isak A."/>
            <person name="van Brunt A."/>
            <person name="Nguyen C."/>
            <person name="Du F."/>
            <person name="Courtney L."/>
            <person name="Kalicki J."/>
            <person name="Ozersky P."/>
            <person name="Abbott S."/>
            <person name="Armstrong J."/>
            <person name="Belter E.A."/>
            <person name="Caruso L."/>
            <person name="Cedroni M."/>
            <person name="Cotton M."/>
            <person name="Davidson T."/>
            <person name="Desai A."/>
            <person name="Elliott G."/>
            <person name="Erb T."/>
            <person name="Fronick C."/>
            <person name="Gaige T."/>
            <person name="Haakenson W."/>
            <person name="Haglund K."/>
            <person name="Holmes A."/>
            <person name="Harkins R."/>
            <person name="Kim K."/>
            <person name="Kruchowski S.S."/>
            <person name="Strong C.M."/>
            <person name="Grewal N."/>
            <person name="Goyea E."/>
            <person name="Hou S."/>
            <person name="Levy A."/>
            <person name="Martinka S."/>
            <person name="Mead K."/>
            <person name="McLellan M.D."/>
            <person name="Meyer R."/>
            <person name="Randall-Maher J."/>
            <person name="Tomlinson C."/>
            <person name="Dauphin-Kohlberg S."/>
            <person name="Kozlowicz-Reilly A."/>
            <person name="Shah N."/>
            <person name="Swearengen-Shahid S."/>
            <person name="Snider J."/>
            <person name="Strong J.T."/>
            <person name="Thompson J."/>
            <person name="Yoakum M."/>
            <person name="Leonard S."/>
            <person name="Pearman C."/>
            <person name="Trani L."/>
            <person name="Radionenko M."/>
            <person name="Waligorski J.E."/>
            <person name="Wang C."/>
            <person name="Rock S.M."/>
            <person name="Tin-Wollam A.-M."/>
            <person name="Maupin R."/>
            <person name="Latreille P."/>
            <person name="Wendl M.C."/>
            <person name="Yang S.-P."/>
            <person name="Pohl C."/>
            <person name="Wallis J.W."/>
            <person name="Spieth J."/>
            <person name="Bieri T.A."/>
            <person name="Berkowicz N."/>
            <person name="Nelson J.O."/>
            <person name="Osborne J."/>
            <person name="Ding L."/>
            <person name="Meyer R."/>
            <person name="Sabo A."/>
            <person name="Shotland Y."/>
            <person name="Sinha P."/>
            <person name="Wohldmann P.E."/>
            <person name="Cook L.L."/>
            <person name="Hickenbotham M.T."/>
            <person name="Eldred J."/>
            <person name="Williams D."/>
            <person name="Jones T.A."/>
            <person name="She X."/>
            <person name="Ciccarelli F.D."/>
            <person name="Izaurralde E."/>
            <person name="Taylor J."/>
            <person name="Schmutz J."/>
            <person name="Myers R.M."/>
            <person name="Cox D.R."/>
            <person name="Huang X."/>
            <person name="McPherson J.D."/>
            <person name="Mardis E.R."/>
            <person name="Clifton S.W."/>
            <person name="Warren W.C."/>
            <person name="Chinwalla A.T."/>
            <person name="Eddy S.R."/>
            <person name="Marra M.A."/>
            <person name="Ovcharenko I."/>
            <person name="Furey T.S."/>
            <person name="Miller W."/>
            <person name="Eichler E.E."/>
            <person name="Bork P."/>
            <person name="Suyama M."/>
            <person name="Torrents D."/>
            <person name="Waterston R.H."/>
            <person name="Wilson R.K."/>
        </authorList>
    </citation>
    <scope>NUCLEOTIDE SEQUENCE [LARGE SCALE GENOMIC DNA]</scope>
</reference>
<reference key="2">
    <citation type="submission" date="2003-07" db="EMBL/GenBank/DDBJ databases">
        <authorList>
            <person name="Sha J.H."/>
            <person name="Zhou Z.M."/>
            <person name="Li J.M."/>
        </authorList>
    </citation>
    <scope>NUCLEOTIDE SEQUENCE [MRNA] OF 660-1756</scope>
    <source>
        <tissue>Testis</tissue>
    </source>
</reference>
<comment type="miscellaneous">
    <text>One of the 8 copies of RANBP2 clustered close to the chromosome 2 centromere.</text>
</comment>
<comment type="sequence caution" evidence="5">
    <conflict type="miscellaneous discrepancy">
        <sequence resource="EMBL-CDS" id="AAQ63888"/>
    </conflict>
    <text>Probable cloning artifact.</text>
</comment>
<organism>
    <name type="scientific">Homo sapiens</name>
    <name type="common">Human</name>
    <dbReference type="NCBI Taxonomy" id="9606"/>
    <lineage>
        <taxon>Eukaryota</taxon>
        <taxon>Metazoa</taxon>
        <taxon>Chordata</taxon>
        <taxon>Craniata</taxon>
        <taxon>Vertebrata</taxon>
        <taxon>Euteleostomi</taxon>
        <taxon>Mammalia</taxon>
        <taxon>Eutheria</taxon>
        <taxon>Euarchontoglires</taxon>
        <taxon>Primates</taxon>
        <taxon>Haplorrhini</taxon>
        <taxon>Catarrhini</taxon>
        <taxon>Hominidae</taxon>
        <taxon>Homo</taxon>
    </lineage>
</organism>
<dbReference type="EMBL" id="AC093616">
    <property type="status" value="NOT_ANNOTATED_CDS"/>
    <property type="molecule type" value="Genomic_DNA"/>
</dbReference>
<dbReference type="EMBL" id="AY354203">
    <property type="protein sequence ID" value="AAQ63888.1"/>
    <property type="status" value="ALT_SEQ"/>
    <property type="molecule type" value="mRNA"/>
</dbReference>
<dbReference type="CCDS" id="CCDS42710.2"/>
<dbReference type="RefSeq" id="NP_001071638.2">
    <property type="nucleotide sequence ID" value="NM_001078170.3"/>
</dbReference>
<dbReference type="SMR" id="P0DJD1"/>
<dbReference type="BioGRID" id="610251">
    <property type="interactions" value="47"/>
</dbReference>
<dbReference type="FunCoup" id="P0DJD1">
    <property type="interactions" value="217"/>
</dbReference>
<dbReference type="IntAct" id="P0DJD1">
    <property type="interactions" value="13"/>
</dbReference>
<dbReference type="STRING" id="9606.ENSP00000381214"/>
<dbReference type="GlyGen" id="P0DJD1">
    <property type="glycosylation" value="1 site, 1 O-linked glycan (1 site)"/>
</dbReference>
<dbReference type="iPTMnet" id="P0DJD1"/>
<dbReference type="PhosphoSitePlus" id="P0DJD1"/>
<dbReference type="BioMuta" id="RGPD2"/>
<dbReference type="DMDM" id="374253661"/>
<dbReference type="jPOST" id="P0DJD1"/>
<dbReference type="MassIVE" id="P0DJD1"/>
<dbReference type="PaxDb" id="9606-ENSP00000381214"/>
<dbReference type="PeptideAtlas" id="P0DJD1"/>
<dbReference type="ProteomicsDB" id="52539"/>
<dbReference type="Pumba" id="P0DJD1"/>
<dbReference type="Antibodypedia" id="76124">
    <property type="antibodies" value="2 antibodies from 2 providers"/>
</dbReference>
<dbReference type="Ensembl" id="ENST00000398146.5">
    <property type="protein sequence ID" value="ENSP00000381214.3"/>
    <property type="gene ID" value="ENSG00000185304.16"/>
</dbReference>
<dbReference type="GeneID" id="729857"/>
<dbReference type="KEGG" id="hsa:729857"/>
<dbReference type="MANE-Select" id="ENST00000398146.5">
    <property type="protein sequence ID" value="ENSP00000381214.3"/>
    <property type="RefSeq nucleotide sequence ID" value="NM_001078170.3"/>
    <property type="RefSeq protein sequence ID" value="NP_001071638.2"/>
</dbReference>
<dbReference type="UCSC" id="uc010fhc.3">
    <property type="organism name" value="human"/>
</dbReference>
<dbReference type="AGR" id="HGNC:32415"/>
<dbReference type="CTD" id="729857"/>
<dbReference type="DisGeNET" id="729857"/>
<dbReference type="GeneCards" id="RGPD2"/>
<dbReference type="HGNC" id="HGNC:32415">
    <property type="gene designation" value="RGPD2"/>
</dbReference>
<dbReference type="HPA" id="ENSG00000185304">
    <property type="expression patterns" value="Low tissue specificity"/>
</dbReference>
<dbReference type="MIM" id="612705">
    <property type="type" value="gene"/>
</dbReference>
<dbReference type="neXtProt" id="NX_P0DJD1"/>
<dbReference type="OpenTargets" id="ENSG00000185304"/>
<dbReference type="VEuPathDB" id="HostDB:ENSG00000185304"/>
<dbReference type="eggNOG" id="KOG0864">
    <property type="taxonomic scope" value="Eukaryota"/>
</dbReference>
<dbReference type="GeneTree" id="ENSGT00940000164065"/>
<dbReference type="HOGENOM" id="CLU_004100_0_0_1"/>
<dbReference type="InParanoid" id="P0DJD1"/>
<dbReference type="OrthoDB" id="9523654at2759"/>
<dbReference type="PAN-GO" id="P0DJD1">
    <property type="GO annotations" value="4 GO annotations based on evolutionary models"/>
</dbReference>
<dbReference type="PhylomeDB" id="P0DJD1"/>
<dbReference type="TreeFam" id="TF314797"/>
<dbReference type="PathwayCommons" id="P0DJD1"/>
<dbReference type="SignaLink" id="P0DJD1"/>
<dbReference type="BioGRID-ORCS" id="729857">
    <property type="hits" value="166 hits in 1073 CRISPR screens"/>
</dbReference>
<dbReference type="ChiTaRS" id="RGPD2">
    <property type="organism name" value="human"/>
</dbReference>
<dbReference type="GenomeRNAi" id="729857"/>
<dbReference type="Pharos" id="P0DJD1">
    <property type="development level" value="Tdark"/>
</dbReference>
<dbReference type="PRO" id="PR:P0DJD1"/>
<dbReference type="Proteomes" id="UP000005640">
    <property type="component" value="Chromosome 2"/>
</dbReference>
<dbReference type="RNAct" id="P0DJD1">
    <property type="molecule type" value="protein"/>
</dbReference>
<dbReference type="Bgee" id="ENSG00000185304">
    <property type="expression patterns" value="Expressed in left testis and 97 other cell types or tissues"/>
</dbReference>
<dbReference type="ExpressionAtlas" id="P0DJD1">
    <property type="expression patterns" value="baseline and differential"/>
</dbReference>
<dbReference type="GO" id="GO:0005737">
    <property type="term" value="C:cytoplasm"/>
    <property type="evidence" value="ECO:0000318"/>
    <property type="project" value="GO_Central"/>
</dbReference>
<dbReference type="GO" id="GO:0005643">
    <property type="term" value="C:nuclear pore"/>
    <property type="evidence" value="ECO:0000318"/>
    <property type="project" value="GO_Central"/>
</dbReference>
<dbReference type="GO" id="GO:0006607">
    <property type="term" value="P:NLS-bearing protein import into nucleus"/>
    <property type="evidence" value="ECO:0000318"/>
    <property type="project" value="GO_Central"/>
</dbReference>
<dbReference type="CDD" id="cd13177">
    <property type="entry name" value="RanBD2_RanBP2-like"/>
    <property type="match status" value="1"/>
</dbReference>
<dbReference type="CDD" id="cd14685">
    <property type="entry name" value="RanBD3_RanBP2-like"/>
    <property type="match status" value="1"/>
</dbReference>
<dbReference type="FunFam" id="2.30.29.30:FF:000018">
    <property type="entry name" value="E3 SUMO-protein ligase RanBP2"/>
    <property type="match status" value="2"/>
</dbReference>
<dbReference type="FunFam" id="1.25.40.10:FF:000114">
    <property type="entry name" value="E3 SUMO-protein ligase RanBP2 isoform X1"/>
    <property type="match status" value="1"/>
</dbReference>
<dbReference type="FunFam" id="1.10.220.60:FF:000003">
    <property type="entry name" value="GRIP and coiled-coil domain-containing protein 2"/>
    <property type="match status" value="1"/>
</dbReference>
<dbReference type="Gene3D" id="2.30.29.30">
    <property type="entry name" value="Pleckstrin-homology domain (PH domain)/Phosphotyrosine-binding domain (PTB)"/>
    <property type="match status" value="2"/>
</dbReference>
<dbReference type="Gene3D" id="1.25.40.10">
    <property type="entry name" value="Tetratricopeptide repeat domain"/>
    <property type="match status" value="1"/>
</dbReference>
<dbReference type="InterPro" id="IPR032023">
    <property type="entry name" value="GCC2_Rab_bind"/>
</dbReference>
<dbReference type="InterPro" id="IPR000237">
    <property type="entry name" value="GRIP_dom"/>
</dbReference>
<dbReference type="InterPro" id="IPR011993">
    <property type="entry name" value="PH-like_dom_sf"/>
</dbReference>
<dbReference type="InterPro" id="IPR000156">
    <property type="entry name" value="Ran_bind_dom"/>
</dbReference>
<dbReference type="InterPro" id="IPR045255">
    <property type="entry name" value="RanBP1-like"/>
</dbReference>
<dbReference type="InterPro" id="IPR011990">
    <property type="entry name" value="TPR-like_helical_dom_sf"/>
</dbReference>
<dbReference type="InterPro" id="IPR013105">
    <property type="entry name" value="TPR_2"/>
</dbReference>
<dbReference type="InterPro" id="IPR019734">
    <property type="entry name" value="TPR_rpt"/>
</dbReference>
<dbReference type="PANTHER" id="PTHR23138">
    <property type="entry name" value="RAN BINDING PROTEIN"/>
    <property type="match status" value="1"/>
</dbReference>
<dbReference type="PANTHER" id="PTHR23138:SF168">
    <property type="entry name" value="RANBP2-LIKE AND GRIP DOMAIN-CONTAINING PROTEIN 1-RELATED"/>
    <property type="match status" value="1"/>
</dbReference>
<dbReference type="Pfam" id="PF01465">
    <property type="entry name" value="GRIP"/>
    <property type="match status" value="1"/>
</dbReference>
<dbReference type="Pfam" id="PF16704">
    <property type="entry name" value="Rab_bind"/>
    <property type="match status" value="1"/>
</dbReference>
<dbReference type="Pfam" id="PF00638">
    <property type="entry name" value="Ran_BP1"/>
    <property type="match status" value="2"/>
</dbReference>
<dbReference type="Pfam" id="PF07719">
    <property type="entry name" value="TPR_2"/>
    <property type="match status" value="1"/>
</dbReference>
<dbReference type="SMART" id="SM00755">
    <property type="entry name" value="Grip"/>
    <property type="match status" value="1"/>
</dbReference>
<dbReference type="SMART" id="SM00160">
    <property type="entry name" value="RanBD"/>
    <property type="match status" value="2"/>
</dbReference>
<dbReference type="SMART" id="SM00028">
    <property type="entry name" value="TPR"/>
    <property type="match status" value="1"/>
</dbReference>
<dbReference type="SUPFAM" id="SSF50729">
    <property type="entry name" value="PH domain-like"/>
    <property type="match status" value="2"/>
</dbReference>
<dbReference type="SUPFAM" id="SSF48452">
    <property type="entry name" value="TPR-like"/>
    <property type="match status" value="1"/>
</dbReference>
<dbReference type="PROSITE" id="PS50913">
    <property type="entry name" value="GRIP"/>
    <property type="match status" value="1"/>
</dbReference>
<dbReference type="PROSITE" id="PS50196">
    <property type="entry name" value="RANBD1"/>
    <property type="match status" value="2"/>
</dbReference>
<dbReference type="PROSITE" id="PS50005">
    <property type="entry name" value="TPR"/>
    <property type="match status" value="1"/>
</dbReference>
<dbReference type="PROSITE" id="PS50293">
    <property type="entry name" value="TPR_REGION"/>
    <property type="match status" value="1"/>
</dbReference>
<gene>
    <name type="primary">RGPD2</name>
    <name type="synonym">RANBP2L2</name>
    <name type="synonym">RGP2</name>
</gene>
<protein>
    <recommendedName>
        <fullName>RANBP2-like and GRIP domain-containing protein 2</fullName>
    </recommendedName>
    <alternativeName>
        <fullName>Ran-binding protein 2-like 2</fullName>
        <shortName>RanBP2-like 2</shortName>
        <shortName>RanBP2L2</shortName>
    </alternativeName>
</protein>
<proteinExistence type="evidence at protein level"/>
<feature type="chain" id="PRO_0000415356" description="RANBP2-like and GRIP domain-containing protein 2">
    <location>
        <begin position="1"/>
        <end position="1756"/>
    </location>
</feature>
<feature type="repeat" description="TPR 1">
    <location>
        <begin position="59"/>
        <end position="92"/>
    </location>
</feature>
<feature type="repeat" description="TPR 2">
    <location>
        <begin position="583"/>
        <end position="616"/>
    </location>
</feature>
<feature type="repeat" description="TPR 3">
    <location>
        <begin position="647"/>
        <end position="680"/>
    </location>
</feature>
<feature type="domain" description="RanBD1 1" evidence="2">
    <location>
        <begin position="1029"/>
        <end position="1165"/>
    </location>
</feature>
<feature type="domain" description="RanBD1 2" evidence="2">
    <location>
        <begin position="1326"/>
        <end position="1462"/>
    </location>
</feature>
<feature type="domain" description="GRIP" evidence="3">
    <location>
        <begin position="1693"/>
        <end position="1743"/>
    </location>
</feature>
<feature type="region of interest" description="Disordered" evidence="4">
    <location>
        <begin position="759"/>
        <end position="804"/>
    </location>
</feature>
<feature type="region of interest" description="Disordered" evidence="4">
    <location>
        <begin position="1206"/>
        <end position="1241"/>
    </location>
</feature>
<feature type="region of interest" description="Disordered" evidence="4">
    <location>
        <begin position="1299"/>
        <end position="1324"/>
    </location>
</feature>
<feature type="region of interest" description="Disordered" evidence="4">
    <location>
        <begin position="1573"/>
        <end position="1614"/>
    </location>
</feature>
<feature type="compositionally biased region" description="Low complexity" evidence="4">
    <location>
        <begin position="777"/>
        <end position="796"/>
    </location>
</feature>
<feature type="compositionally biased region" description="Polar residues" evidence="4">
    <location>
        <begin position="1228"/>
        <end position="1237"/>
    </location>
</feature>
<feature type="compositionally biased region" description="Acidic residues" evidence="4">
    <location>
        <begin position="1310"/>
        <end position="1322"/>
    </location>
</feature>
<feature type="compositionally biased region" description="Polar residues" evidence="4">
    <location>
        <begin position="1573"/>
        <end position="1586"/>
    </location>
</feature>
<feature type="compositionally biased region" description="Basic and acidic residues" evidence="4">
    <location>
        <begin position="1587"/>
        <end position="1610"/>
    </location>
</feature>
<feature type="modified residue" description="Phosphoserine" evidence="1">
    <location>
        <position position="21"/>
    </location>
</feature>
<name>RGPD2_HUMAN</name>